<accession>Q8L8B8</accession>
<accession>Q9ZQD5</accession>
<keyword id="KW-0002">3D-structure</keyword>
<keyword id="KW-0025">Alternative splicing</keyword>
<keyword id="KW-0203">Cytokinin biosynthesis</keyword>
<keyword id="KW-0963">Cytoplasm</keyword>
<keyword id="KW-0378">Hydrolase</keyword>
<keyword id="KW-0539">Nucleus</keyword>
<keyword id="KW-1185">Reference proteome</keyword>
<proteinExistence type="evidence at protein level"/>
<evidence type="ECO:0000250" key="1">
    <source>
        <dbReference type="UniProtKB" id="B2HS63"/>
    </source>
</evidence>
<evidence type="ECO:0000269" key="2">
    <source>
    </source>
</evidence>
<evidence type="ECO:0000305" key="3"/>
<evidence type="ECO:0007829" key="4">
    <source>
        <dbReference type="PDB" id="2A33"/>
    </source>
</evidence>
<name>LOG3_ARATH</name>
<feature type="chain" id="PRO_0000395046" description="Cytokinin riboside 5'-monophosphate phosphoribohydrolase LOG3">
    <location>
        <begin position="1"/>
        <end position="215"/>
    </location>
</feature>
<feature type="binding site" evidence="1">
    <location>
        <position position="84"/>
    </location>
    <ligand>
        <name>substrate</name>
    </ligand>
</feature>
<feature type="binding site" evidence="1">
    <location>
        <begin position="102"/>
        <end position="103"/>
    </location>
    <ligand>
        <name>substrate</name>
    </ligand>
</feature>
<feature type="binding site" evidence="1">
    <location>
        <begin position="119"/>
        <end position="125"/>
    </location>
    <ligand>
        <name>substrate</name>
    </ligand>
</feature>
<feature type="binding site" evidence="1">
    <location>
        <position position="131"/>
    </location>
    <ligand>
        <name>substrate</name>
    </ligand>
</feature>
<feature type="strand" evidence="4">
    <location>
        <begin position="14"/>
        <end position="19"/>
    </location>
</feature>
<feature type="helix" evidence="4">
    <location>
        <begin position="28"/>
        <end position="43"/>
    </location>
</feature>
<feature type="strand" evidence="4">
    <location>
        <begin position="47"/>
        <end position="50"/>
    </location>
</feature>
<feature type="helix" evidence="4">
    <location>
        <begin position="56"/>
        <end position="67"/>
    </location>
</feature>
<feature type="strand" evidence="4">
    <location>
        <begin position="72"/>
        <end position="79"/>
    </location>
</feature>
<feature type="strand" evidence="4">
    <location>
        <begin position="92"/>
        <end position="98"/>
    </location>
</feature>
<feature type="helix" evidence="4">
    <location>
        <begin position="99"/>
        <end position="108"/>
    </location>
</feature>
<feature type="strand" evidence="4">
    <location>
        <begin position="111"/>
        <end position="115"/>
    </location>
</feature>
<feature type="helix" evidence="4">
    <location>
        <begin position="120"/>
        <end position="134"/>
    </location>
</feature>
<feature type="strand" evidence="4">
    <location>
        <begin position="142"/>
        <end position="145"/>
    </location>
</feature>
<feature type="helix" evidence="4">
    <location>
        <begin position="147"/>
        <end position="149"/>
    </location>
</feature>
<feature type="helix" evidence="4">
    <location>
        <begin position="152"/>
        <end position="163"/>
    </location>
</feature>
<feature type="helix" evidence="4">
    <location>
        <begin position="169"/>
        <end position="172"/>
    </location>
</feature>
<feature type="strand" evidence="4">
    <location>
        <begin position="175"/>
        <end position="180"/>
    </location>
</feature>
<feature type="helix" evidence="4">
    <location>
        <begin position="181"/>
        <end position="189"/>
    </location>
</feature>
<reference key="1">
    <citation type="journal article" date="1999" name="Nature">
        <title>Sequence and analysis of chromosome 2 of the plant Arabidopsis thaliana.</title>
        <authorList>
            <person name="Lin X."/>
            <person name="Kaul S."/>
            <person name="Rounsley S.D."/>
            <person name="Shea T.P."/>
            <person name="Benito M.-I."/>
            <person name="Town C.D."/>
            <person name="Fujii C.Y."/>
            <person name="Mason T.M."/>
            <person name="Bowman C.L."/>
            <person name="Barnstead M.E."/>
            <person name="Feldblyum T.V."/>
            <person name="Buell C.R."/>
            <person name="Ketchum K.A."/>
            <person name="Lee J.J."/>
            <person name="Ronning C.M."/>
            <person name="Koo H.L."/>
            <person name="Moffat K.S."/>
            <person name="Cronin L.A."/>
            <person name="Shen M."/>
            <person name="Pai G."/>
            <person name="Van Aken S."/>
            <person name="Umayam L."/>
            <person name="Tallon L.J."/>
            <person name="Gill J.E."/>
            <person name="Adams M.D."/>
            <person name="Carrera A.J."/>
            <person name="Creasy T.H."/>
            <person name="Goodman H.M."/>
            <person name="Somerville C.R."/>
            <person name="Copenhaver G.P."/>
            <person name="Preuss D."/>
            <person name="Nierman W.C."/>
            <person name="White O."/>
            <person name="Eisen J.A."/>
            <person name="Salzberg S.L."/>
            <person name="Fraser C.M."/>
            <person name="Venter J.C."/>
        </authorList>
    </citation>
    <scope>NUCLEOTIDE SEQUENCE [LARGE SCALE GENOMIC DNA]</scope>
    <source>
        <strain>cv. Columbia</strain>
    </source>
</reference>
<reference key="2">
    <citation type="journal article" date="2017" name="Plant J.">
        <title>Araport11: a complete reannotation of the Arabidopsis thaliana reference genome.</title>
        <authorList>
            <person name="Cheng C.Y."/>
            <person name="Krishnakumar V."/>
            <person name="Chan A.P."/>
            <person name="Thibaud-Nissen F."/>
            <person name="Schobel S."/>
            <person name="Town C.D."/>
        </authorList>
    </citation>
    <scope>GENOME REANNOTATION</scope>
    <source>
        <strain>cv. Columbia</strain>
    </source>
</reference>
<reference key="3">
    <citation type="journal article" date="2002" name="Plant Physiol.">
        <title>Cloning and sequencing of cDNAs for hypothetical genes from chromosome 2 of Arabidopsis.</title>
        <authorList>
            <person name="Xiao Y.-L."/>
            <person name="Malik M."/>
            <person name="Whitelaw C.A."/>
            <person name="Town C.D."/>
        </authorList>
    </citation>
    <scope>NUCLEOTIDE SEQUENCE [MRNA]</scope>
</reference>
<reference key="4">
    <citation type="submission" date="2005-03" db="EMBL/GenBank/DDBJ databases">
        <authorList>
            <person name="Underwood B.A."/>
            <person name="Xiao Y.-L."/>
            <person name="Moskal W.A. Jr."/>
            <person name="Monaghan E.L."/>
            <person name="Wang W."/>
            <person name="Redman J.C."/>
            <person name="Wu H.C."/>
            <person name="Utterback T."/>
            <person name="Town C.D."/>
        </authorList>
    </citation>
    <scope>NUCLEOTIDE SEQUENCE [LARGE SCALE MRNA]</scope>
    <source>
        <strain>cv. Columbia</strain>
    </source>
</reference>
<reference key="5">
    <citation type="journal article" date="2007" name="Nature">
        <title>Direct control of shoot meristem activity by a cytokinin-activating enzyme.</title>
        <authorList>
            <person name="Kurakawa T."/>
            <person name="Ueda N."/>
            <person name="Maekawa M."/>
            <person name="Kobayashi K."/>
            <person name="Kojima M."/>
            <person name="Nagato Y."/>
            <person name="Sakakibara H."/>
            <person name="Kyozuka J."/>
        </authorList>
    </citation>
    <scope>IDENTIFICATION</scope>
</reference>
<reference key="6">
    <citation type="journal article" date="2009" name="Plant Cell">
        <title>Functional analyses of LONELY GUY cytokinin-activating enzymes reveal the importance of the direct activation pathway in Arabidopsis.</title>
        <authorList>
            <person name="Kuroha T."/>
            <person name="Tokunaga H."/>
            <person name="Kojima M."/>
            <person name="Ueda N."/>
            <person name="Ishida T."/>
            <person name="Nagawa S."/>
            <person name="Fukuda H."/>
            <person name="Sugimoto K."/>
            <person name="Sakakibara H."/>
        </authorList>
    </citation>
    <scope>FUNCTION</scope>
    <scope>CATALYTIC ACTIVITY</scope>
    <scope>BIOPHYSICOCHEMICAL PROPERTIES</scope>
    <scope>DISRUPTION PHENOTYPE</scope>
    <scope>TISSUE SPECIFICITY</scope>
    <scope>SUBCELLULAR LOCATION</scope>
    <scope>GENE FAMILY</scope>
    <scope>NOMENCLATURE</scope>
</reference>
<reference key="7">
    <citation type="journal article" date="2006" name="Proteins">
        <title>X-ray crystal structures of the conserved hypothetical proteins from Arabidopsis thaliana gene loci At5g11950 and At2g37210.</title>
        <authorList>
            <person name="Jeon W.B."/>
            <person name="Allard S.T."/>
            <person name="Bingman C.A."/>
            <person name="Bitto E."/>
            <person name="Han B.W."/>
            <person name="Wesenberg G.E."/>
            <person name="Phillips G.N. Jr."/>
        </authorList>
    </citation>
    <scope>X-RAY CRYSTALLOGRAPHY (1.95 ANGSTROMS)</scope>
</reference>
<organism>
    <name type="scientific">Arabidopsis thaliana</name>
    <name type="common">Mouse-ear cress</name>
    <dbReference type="NCBI Taxonomy" id="3702"/>
    <lineage>
        <taxon>Eukaryota</taxon>
        <taxon>Viridiplantae</taxon>
        <taxon>Streptophyta</taxon>
        <taxon>Embryophyta</taxon>
        <taxon>Tracheophyta</taxon>
        <taxon>Spermatophyta</taxon>
        <taxon>Magnoliopsida</taxon>
        <taxon>eudicotyledons</taxon>
        <taxon>Gunneridae</taxon>
        <taxon>Pentapetalae</taxon>
        <taxon>rosids</taxon>
        <taxon>malvids</taxon>
        <taxon>Brassicales</taxon>
        <taxon>Brassicaceae</taxon>
        <taxon>Camelineae</taxon>
        <taxon>Arabidopsis</taxon>
    </lineage>
</organism>
<protein>
    <recommendedName>
        <fullName>Cytokinin riboside 5'-monophosphate phosphoribohydrolase LOG3</fullName>
        <ecNumber>3.2.2.n1</ecNumber>
    </recommendedName>
    <alternativeName>
        <fullName>Protein LONELY GUY 3</fullName>
    </alternativeName>
</protein>
<comment type="function">
    <text evidence="2">Cytokinin-activating enzyme working in the direct activation pathway. Phosphoribohydrolase that converts inactive cytokinin nucleotides to the biologically active free-base forms.</text>
</comment>
<comment type="catalytic activity">
    <reaction evidence="2">
        <text>N(6)-(dimethylallyl)adenosine 5'-phosphate + H2O = N(6)-dimethylallyladenine + D-ribose 5-phosphate</text>
        <dbReference type="Rhea" id="RHEA:48560"/>
        <dbReference type="ChEBI" id="CHEBI:15377"/>
        <dbReference type="ChEBI" id="CHEBI:17660"/>
        <dbReference type="ChEBI" id="CHEBI:57526"/>
        <dbReference type="ChEBI" id="CHEBI:78346"/>
        <dbReference type="EC" id="3.2.2.n1"/>
    </reaction>
</comment>
<comment type="catalytic activity">
    <reaction evidence="2">
        <text>9-ribosyl-trans-zeatin 5'-phosphate + H2O = trans-zeatin + D-ribose 5-phosphate</text>
        <dbReference type="Rhea" id="RHEA:48564"/>
        <dbReference type="ChEBI" id="CHEBI:15377"/>
        <dbReference type="ChEBI" id="CHEBI:16522"/>
        <dbReference type="ChEBI" id="CHEBI:78346"/>
        <dbReference type="ChEBI" id="CHEBI:87947"/>
        <dbReference type="EC" id="3.2.2.n1"/>
    </reaction>
</comment>
<comment type="biophysicochemical properties">
    <kinetics>
        <KM evidence="2">14 uM for N(6)-(Delta(2)-isopentenyl)-adenosine 5'-phosphate</KM>
        <Vmax evidence="2">1.5 umol/min/mg enzyme with N(6)-(Delta(2)-isopentenyl)-adenosine 5'-phosphate as substrate</Vmax>
    </kinetics>
    <phDependence>
        <text evidence="2">Optimum pH is 6.5.</text>
    </phDependence>
</comment>
<comment type="subcellular location">
    <subcellularLocation>
        <location evidence="2">Cytoplasm</location>
    </subcellularLocation>
    <subcellularLocation>
        <location evidence="2">Nucleus</location>
    </subcellularLocation>
</comment>
<comment type="alternative products">
    <event type="alternative splicing"/>
    <isoform>
        <id>Q8L8B8-1</id>
        <name>1</name>
        <sequence type="displayed"/>
    </isoform>
    <text>A number of isoforms are produced. According to EST sequences.</text>
</comment>
<comment type="tissue specificity">
    <text evidence="2">Expressed in roots and shoots. Detected in root procambium, lateral root primordia, vascular tissues of immature leaves, axillary buds, style and ovular funiculus.</text>
</comment>
<comment type="disruption phenotype">
    <text evidence="2">No visible phenotype under normal growth conditions; due to the redundancy with other LOG proteins.</text>
</comment>
<comment type="similarity">
    <text evidence="3">Belongs to the LOG family.</text>
</comment>
<comment type="sequence caution" evidence="3">
    <conflict type="erroneous gene model prediction">
        <sequence resource="EMBL-CDS" id="AAD18138"/>
    </conflict>
</comment>
<sequence>MEIKGESMQKSKFRRICVFCGSSQGKKSSYQDAAVDLGNELVSRNIDLVYGGGSIGLMGLVSQAVHDGGRHVIGIIPKTLMPRELTGETVGEVRAVADMHQRKAEMAKHSDAFIALPGGYGTLEELLEVITWAQLGIHDKPVGLLNVDGYYNSLLSFIDKAVEEGFISPTAREIIVSAPTAKELVKKLEEYAPCHERVATKLCWEMERIGYSSEE</sequence>
<dbReference type="EC" id="3.2.2.n1"/>
<dbReference type="EMBL" id="AC006260">
    <property type="protein sequence ID" value="AAD18138.2"/>
    <property type="status" value="ALT_SEQ"/>
    <property type="molecule type" value="Genomic_DNA"/>
</dbReference>
<dbReference type="EMBL" id="CP002685">
    <property type="protein sequence ID" value="AEC09367.1"/>
    <property type="molecule type" value="Genomic_DNA"/>
</dbReference>
<dbReference type="EMBL" id="AY102554">
    <property type="protein sequence ID" value="AAM76759.1"/>
    <property type="molecule type" value="mRNA"/>
</dbReference>
<dbReference type="EMBL" id="AY954818">
    <property type="protein sequence ID" value="AAX55144.1"/>
    <property type="molecule type" value="mRNA"/>
</dbReference>
<dbReference type="PIR" id="H84789">
    <property type="entry name" value="H84789"/>
</dbReference>
<dbReference type="RefSeq" id="NP_181258.2">
    <molecule id="Q8L8B8-1"/>
    <property type="nucleotide sequence ID" value="NM_129277.3"/>
</dbReference>
<dbReference type="PDB" id="2A33">
    <property type="method" value="X-ray"/>
    <property type="resolution" value="1.95 A"/>
    <property type="chains" value="A/B=1-215"/>
</dbReference>
<dbReference type="PDB" id="2Q4O">
    <property type="method" value="X-ray"/>
    <property type="resolution" value="1.95 A"/>
    <property type="chains" value="A/B=1-215"/>
</dbReference>
<dbReference type="PDBsum" id="2A33"/>
<dbReference type="PDBsum" id="2Q4O"/>
<dbReference type="SMR" id="Q8L8B8"/>
<dbReference type="BioGRID" id="3642">
    <property type="interactions" value="2"/>
</dbReference>
<dbReference type="FunCoup" id="Q8L8B8">
    <property type="interactions" value="1"/>
</dbReference>
<dbReference type="STRING" id="3702.Q8L8B8"/>
<dbReference type="ProteomicsDB" id="238585">
    <molecule id="Q8L8B8-1"/>
</dbReference>
<dbReference type="DNASU" id="818298"/>
<dbReference type="EnsemblPlants" id="AT2G37210.1">
    <molecule id="Q8L8B8-1"/>
    <property type="protein sequence ID" value="AT2G37210.1"/>
    <property type="gene ID" value="AT2G37210"/>
</dbReference>
<dbReference type="GeneID" id="818298"/>
<dbReference type="Gramene" id="AT2G37210.1">
    <molecule id="Q8L8B8-1"/>
    <property type="protein sequence ID" value="AT2G37210.1"/>
    <property type="gene ID" value="AT2G37210"/>
</dbReference>
<dbReference type="KEGG" id="ath:AT2G37210"/>
<dbReference type="Araport" id="AT2G37210"/>
<dbReference type="TAIR" id="AT2G37210">
    <property type="gene designation" value="LOG3"/>
</dbReference>
<dbReference type="HOGENOM" id="CLU_058336_2_0_1"/>
<dbReference type="InParanoid" id="Q8L8B8"/>
<dbReference type="OMA" id="TLVWGGS"/>
<dbReference type="OrthoDB" id="414463at2759"/>
<dbReference type="PhylomeDB" id="Q8L8B8"/>
<dbReference type="EvolutionaryTrace" id="Q8L8B8"/>
<dbReference type="PRO" id="PR:Q8L8B8"/>
<dbReference type="Proteomes" id="UP000006548">
    <property type="component" value="Chromosome 2"/>
</dbReference>
<dbReference type="ExpressionAtlas" id="Q8L8B8">
    <property type="expression patterns" value="baseline and differential"/>
</dbReference>
<dbReference type="GO" id="GO:0005829">
    <property type="term" value="C:cytosol"/>
    <property type="evidence" value="ECO:0007669"/>
    <property type="project" value="UniProtKB-ARBA"/>
</dbReference>
<dbReference type="GO" id="GO:0005634">
    <property type="term" value="C:nucleus"/>
    <property type="evidence" value="ECO:0007669"/>
    <property type="project" value="UniProtKB-SubCell"/>
</dbReference>
<dbReference type="GO" id="GO:0102682">
    <property type="term" value="F:cytokinin riboside 5'-monophosphate phosphoribohydrolase activity"/>
    <property type="evidence" value="ECO:0007669"/>
    <property type="project" value="RHEA"/>
</dbReference>
<dbReference type="GO" id="GO:0009691">
    <property type="term" value="P:cytokinin biosynthetic process"/>
    <property type="evidence" value="ECO:0007669"/>
    <property type="project" value="UniProtKB-KW"/>
</dbReference>
<dbReference type="FunFam" id="3.40.50.450:FF:000005">
    <property type="entry name" value="CASP-like protein"/>
    <property type="match status" value="1"/>
</dbReference>
<dbReference type="Gene3D" id="3.40.50.450">
    <property type="match status" value="1"/>
</dbReference>
<dbReference type="InterPro" id="IPR005269">
    <property type="entry name" value="LOG"/>
</dbReference>
<dbReference type="InterPro" id="IPR031100">
    <property type="entry name" value="LOG_fam"/>
</dbReference>
<dbReference type="NCBIfam" id="TIGR00730">
    <property type="entry name" value="Rossman fold protein, TIGR00730 family"/>
    <property type="match status" value="1"/>
</dbReference>
<dbReference type="PANTHER" id="PTHR31223:SF69">
    <property type="entry name" value="CYTOKININ RIBOSIDE 5'-MONOPHOSPHATE PHOSPHORIBOHYDROLASE LOG3"/>
    <property type="match status" value="1"/>
</dbReference>
<dbReference type="PANTHER" id="PTHR31223">
    <property type="entry name" value="LOG FAMILY PROTEIN YJL055W"/>
    <property type="match status" value="1"/>
</dbReference>
<dbReference type="Pfam" id="PF03641">
    <property type="entry name" value="Lysine_decarbox"/>
    <property type="match status" value="1"/>
</dbReference>
<dbReference type="SUPFAM" id="SSF102405">
    <property type="entry name" value="MCP/YpsA-like"/>
    <property type="match status" value="1"/>
</dbReference>
<gene>
    <name type="primary">LOG3</name>
    <name type="ordered locus">At2g37210</name>
    <name type="ORF">T2N18.3</name>
</gene>